<sequence>MKQWVLVKTFESLFAELTERAATRPEGSGTVAALDAGVHSQGKKILEEAGEVWIAAEHESDEALAEEISQLLYWTQVLMVGKGLKLEDVYRHL</sequence>
<accession>Q0SIE8</accession>
<evidence type="ECO:0000255" key="1">
    <source>
        <dbReference type="HAMAP-Rule" id="MF_01020"/>
    </source>
</evidence>
<proteinExistence type="inferred from homology"/>
<organism>
    <name type="scientific">Rhodococcus jostii (strain RHA1)</name>
    <dbReference type="NCBI Taxonomy" id="101510"/>
    <lineage>
        <taxon>Bacteria</taxon>
        <taxon>Bacillati</taxon>
        <taxon>Actinomycetota</taxon>
        <taxon>Actinomycetes</taxon>
        <taxon>Mycobacteriales</taxon>
        <taxon>Nocardiaceae</taxon>
        <taxon>Rhodococcus</taxon>
    </lineage>
</organism>
<protein>
    <recommendedName>
        <fullName evidence="1">Phosphoribosyl-ATP pyrophosphatase</fullName>
        <shortName evidence="1">PRA-PH</shortName>
        <ecNumber evidence="1">3.6.1.31</ecNumber>
    </recommendedName>
</protein>
<keyword id="KW-0028">Amino-acid biosynthesis</keyword>
<keyword id="KW-0067">ATP-binding</keyword>
<keyword id="KW-0963">Cytoplasm</keyword>
<keyword id="KW-0368">Histidine biosynthesis</keyword>
<keyword id="KW-0378">Hydrolase</keyword>
<keyword id="KW-0547">Nucleotide-binding</keyword>
<dbReference type="EC" id="3.6.1.31" evidence="1"/>
<dbReference type="EMBL" id="CP000431">
    <property type="protein sequence ID" value="ABG92688.1"/>
    <property type="molecule type" value="Genomic_DNA"/>
</dbReference>
<dbReference type="SMR" id="Q0SIE8"/>
<dbReference type="KEGG" id="rha:RHA1_ro00855"/>
<dbReference type="eggNOG" id="COG0140">
    <property type="taxonomic scope" value="Bacteria"/>
</dbReference>
<dbReference type="HOGENOM" id="CLU_123337_2_1_11"/>
<dbReference type="UniPathway" id="UPA00031">
    <property type="reaction ID" value="UER00007"/>
</dbReference>
<dbReference type="Proteomes" id="UP000008710">
    <property type="component" value="Chromosome"/>
</dbReference>
<dbReference type="GO" id="GO:0005737">
    <property type="term" value="C:cytoplasm"/>
    <property type="evidence" value="ECO:0007669"/>
    <property type="project" value="UniProtKB-SubCell"/>
</dbReference>
<dbReference type="GO" id="GO:0005524">
    <property type="term" value="F:ATP binding"/>
    <property type="evidence" value="ECO:0007669"/>
    <property type="project" value="UniProtKB-KW"/>
</dbReference>
<dbReference type="GO" id="GO:0004636">
    <property type="term" value="F:phosphoribosyl-ATP diphosphatase activity"/>
    <property type="evidence" value="ECO:0007669"/>
    <property type="project" value="UniProtKB-UniRule"/>
</dbReference>
<dbReference type="GO" id="GO:0000105">
    <property type="term" value="P:L-histidine biosynthetic process"/>
    <property type="evidence" value="ECO:0007669"/>
    <property type="project" value="UniProtKB-UniRule"/>
</dbReference>
<dbReference type="CDD" id="cd11547">
    <property type="entry name" value="NTP-PPase_HisE"/>
    <property type="match status" value="1"/>
</dbReference>
<dbReference type="Gene3D" id="1.10.287.1080">
    <property type="entry name" value="MazG-like"/>
    <property type="match status" value="1"/>
</dbReference>
<dbReference type="HAMAP" id="MF_01020">
    <property type="entry name" value="HisE"/>
    <property type="match status" value="1"/>
</dbReference>
<dbReference type="InterPro" id="IPR008179">
    <property type="entry name" value="HisE"/>
</dbReference>
<dbReference type="InterPro" id="IPR021130">
    <property type="entry name" value="PRib-ATP_PPHydrolase-like"/>
</dbReference>
<dbReference type="NCBIfam" id="TIGR03188">
    <property type="entry name" value="histidine_hisI"/>
    <property type="match status" value="1"/>
</dbReference>
<dbReference type="NCBIfam" id="NF001610">
    <property type="entry name" value="PRK00400.1-1"/>
    <property type="match status" value="1"/>
</dbReference>
<dbReference type="PANTHER" id="PTHR42945">
    <property type="entry name" value="HISTIDINE BIOSYNTHESIS BIFUNCTIONAL PROTEIN"/>
    <property type="match status" value="1"/>
</dbReference>
<dbReference type="PANTHER" id="PTHR42945:SF1">
    <property type="entry name" value="HISTIDINE BIOSYNTHESIS BIFUNCTIONAL PROTEIN HIS7"/>
    <property type="match status" value="1"/>
</dbReference>
<dbReference type="Pfam" id="PF01503">
    <property type="entry name" value="PRA-PH"/>
    <property type="match status" value="1"/>
</dbReference>
<dbReference type="SUPFAM" id="SSF101386">
    <property type="entry name" value="all-alpha NTP pyrophosphatases"/>
    <property type="match status" value="1"/>
</dbReference>
<feature type="chain" id="PRO_1000063381" description="Phosphoribosyl-ATP pyrophosphatase">
    <location>
        <begin position="1"/>
        <end position="93"/>
    </location>
</feature>
<name>HIS2_RHOJR</name>
<comment type="catalytic activity">
    <reaction evidence="1">
        <text>1-(5-phospho-beta-D-ribosyl)-ATP + H2O = 1-(5-phospho-beta-D-ribosyl)-5'-AMP + diphosphate + H(+)</text>
        <dbReference type="Rhea" id="RHEA:22828"/>
        <dbReference type="ChEBI" id="CHEBI:15377"/>
        <dbReference type="ChEBI" id="CHEBI:15378"/>
        <dbReference type="ChEBI" id="CHEBI:33019"/>
        <dbReference type="ChEBI" id="CHEBI:59457"/>
        <dbReference type="ChEBI" id="CHEBI:73183"/>
        <dbReference type="EC" id="3.6.1.31"/>
    </reaction>
</comment>
<comment type="pathway">
    <text evidence="1">Amino-acid biosynthesis; L-histidine biosynthesis; L-histidine from 5-phospho-alpha-D-ribose 1-diphosphate: step 2/9.</text>
</comment>
<comment type="subcellular location">
    <subcellularLocation>
        <location evidence="1">Cytoplasm</location>
    </subcellularLocation>
</comment>
<comment type="similarity">
    <text evidence="1">Belongs to the PRA-PH family.</text>
</comment>
<reference key="1">
    <citation type="journal article" date="2006" name="Proc. Natl. Acad. Sci. U.S.A.">
        <title>The complete genome of Rhodococcus sp. RHA1 provides insights into a catabolic powerhouse.</title>
        <authorList>
            <person name="McLeod M.P."/>
            <person name="Warren R.L."/>
            <person name="Hsiao W.W.L."/>
            <person name="Araki N."/>
            <person name="Myhre M."/>
            <person name="Fernandes C."/>
            <person name="Miyazawa D."/>
            <person name="Wong W."/>
            <person name="Lillquist A.L."/>
            <person name="Wang D."/>
            <person name="Dosanjh M."/>
            <person name="Hara H."/>
            <person name="Petrescu A."/>
            <person name="Morin R.D."/>
            <person name="Yang G."/>
            <person name="Stott J.M."/>
            <person name="Schein J.E."/>
            <person name="Shin H."/>
            <person name="Smailus D."/>
            <person name="Siddiqui A.S."/>
            <person name="Marra M.A."/>
            <person name="Jones S.J.M."/>
            <person name="Holt R."/>
            <person name="Brinkman F.S.L."/>
            <person name="Miyauchi K."/>
            <person name="Fukuda M."/>
            <person name="Davies J.E."/>
            <person name="Mohn W.W."/>
            <person name="Eltis L.D."/>
        </authorList>
    </citation>
    <scope>NUCLEOTIDE SEQUENCE [LARGE SCALE GENOMIC DNA]</scope>
    <source>
        <strain>RHA1</strain>
    </source>
</reference>
<gene>
    <name evidence="1" type="primary">hisE</name>
    <name type="ordered locus">RHA1_ro00855</name>
</gene>